<evidence type="ECO:0000255" key="1">
    <source>
        <dbReference type="HAMAP-Rule" id="MF_00037"/>
    </source>
</evidence>
<organism>
    <name type="scientific">Burkholderia multivorans (strain ATCC 17616 / 249)</name>
    <dbReference type="NCBI Taxonomy" id="395019"/>
    <lineage>
        <taxon>Bacteria</taxon>
        <taxon>Pseudomonadati</taxon>
        <taxon>Pseudomonadota</taxon>
        <taxon>Betaproteobacteria</taxon>
        <taxon>Burkholderiales</taxon>
        <taxon>Burkholderiaceae</taxon>
        <taxon>Burkholderia</taxon>
        <taxon>Burkholderia cepacia complex</taxon>
    </lineage>
</organism>
<keyword id="KW-0131">Cell cycle</keyword>
<keyword id="KW-0132">Cell division</keyword>
<keyword id="KW-0133">Cell shape</keyword>
<keyword id="KW-0961">Cell wall biogenesis/degradation</keyword>
<keyword id="KW-0963">Cytoplasm</keyword>
<keyword id="KW-0274">FAD</keyword>
<keyword id="KW-0285">Flavoprotein</keyword>
<keyword id="KW-0521">NADP</keyword>
<keyword id="KW-0560">Oxidoreductase</keyword>
<keyword id="KW-0573">Peptidoglycan synthesis</keyword>
<keyword id="KW-1185">Reference proteome</keyword>
<feature type="chain" id="PRO_1000191404" description="UDP-N-acetylenolpyruvoylglucosamine reductase">
    <location>
        <begin position="1"/>
        <end position="349"/>
    </location>
</feature>
<feature type="domain" description="FAD-binding PCMH-type" evidence="1">
    <location>
        <begin position="25"/>
        <end position="197"/>
    </location>
</feature>
<feature type="active site" evidence="1">
    <location>
        <position position="173"/>
    </location>
</feature>
<feature type="active site" description="Proton donor" evidence="1">
    <location>
        <position position="249"/>
    </location>
</feature>
<feature type="active site" evidence="1">
    <location>
        <position position="345"/>
    </location>
</feature>
<proteinExistence type="inferred from homology"/>
<reference key="1">
    <citation type="submission" date="2007-10" db="EMBL/GenBank/DDBJ databases">
        <title>Complete sequence of chromosome 1 of Burkholderia multivorans ATCC 17616.</title>
        <authorList>
            <person name="Copeland A."/>
            <person name="Lucas S."/>
            <person name="Lapidus A."/>
            <person name="Barry K."/>
            <person name="Glavina del Rio T."/>
            <person name="Dalin E."/>
            <person name="Tice H."/>
            <person name="Pitluck S."/>
            <person name="Chain P."/>
            <person name="Malfatti S."/>
            <person name="Shin M."/>
            <person name="Vergez L."/>
            <person name="Schmutz J."/>
            <person name="Larimer F."/>
            <person name="Land M."/>
            <person name="Hauser L."/>
            <person name="Kyrpides N."/>
            <person name="Kim E."/>
            <person name="Tiedje J."/>
            <person name="Richardson P."/>
        </authorList>
    </citation>
    <scope>NUCLEOTIDE SEQUENCE [LARGE SCALE GENOMIC DNA]</scope>
    <source>
        <strain>ATCC 17616 / 249</strain>
    </source>
</reference>
<reference key="2">
    <citation type="submission" date="2007-04" db="EMBL/GenBank/DDBJ databases">
        <title>Complete genome sequence of Burkholderia multivorans ATCC 17616.</title>
        <authorList>
            <person name="Ohtsubo Y."/>
            <person name="Yamashita A."/>
            <person name="Kurokawa K."/>
            <person name="Takami H."/>
            <person name="Yuhara S."/>
            <person name="Nishiyama E."/>
            <person name="Endo R."/>
            <person name="Miyazaki R."/>
            <person name="Ono A."/>
            <person name="Yano K."/>
            <person name="Ito M."/>
            <person name="Sota M."/>
            <person name="Yuji N."/>
            <person name="Hattori M."/>
            <person name="Tsuda M."/>
        </authorList>
    </citation>
    <scope>NUCLEOTIDE SEQUENCE [LARGE SCALE GENOMIC DNA]</scope>
    <source>
        <strain>ATCC 17616 / 249</strain>
    </source>
</reference>
<gene>
    <name evidence="1" type="primary">murB</name>
    <name type="ordered locus">Bmul_0742</name>
    <name type="ordered locus">BMULJ_02518</name>
</gene>
<protein>
    <recommendedName>
        <fullName evidence="1">UDP-N-acetylenolpyruvoylglucosamine reductase</fullName>
        <ecNumber evidence="1">1.3.1.98</ecNumber>
    </recommendedName>
    <alternativeName>
        <fullName evidence="1">UDP-N-acetylmuramate dehydrogenase</fullName>
    </alternativeName>
</protein>
<accession>A9AGJ5</accession>
<dbReference type="EC" id="1.3.1.98" evidence="1"/>
<dbReference type="EMBL" id="CP000868">
    <property type="protein sequence ID" value="ABX14437.1"/>
    <property type="molecule type" value="Genomic_DNA"/>
</dbReference>
<dbReference type="EMBL" id="AP009385">
    <property type="protein sequence ID" value="BAG44409.1"/>
    <property type="molecule type" value="Genomic_DNA"/>
</dbReference>
<dbReference type="RefSeq" id="WP_012212837.1">
    <property type="nucleotide sequence ID" value="NC_010084.1"/>
</dbReference>
<dbReference type="SMR" id="A9AGJ5"/>
<dbReference type="STRING" id="395019.BMULJ_02518"/>
<dbReference type="KEGG" id="bmj:BMULJ_02518"/>
<dbReference type="KEGG" id="bmu:Bmul_0742"/>
<dbReference type="eggNOG" id="COG0812">
    <property type="taxonomic scope" value="Bacteria"/>
</dbReference>
<dbReference type="HOGENOM" id="CLU_035304_0_0_4"/>
<dbReference type="UniPathway" id="UPA00219"/>
<dbReference type="Proteomes" id="UP000008815">
    <property type="component" value="Chromosome 1"/>
</dbReference>
<dbReference type="GO" id="GO:0005829">
    <property type="term" value="C:cytosol"/>
    <property type="evidence" value="ECO:0007669"/>
    <property type="project" value="TreeGrafter"/>
</dbReference>
<dbReference type="GO" id="GO:0071949">
    <property type="term" value="F:FAD binding"/>
    <property type="evidence" value="ECO:0007669"/>
    <property type="project" value="InterPro"/>
</dbReference>
<dbReference type="GO" id="GO:0008762">
    <property type="term" value="F:UDP-N-acetylmuramate dehydrogenase activity"/>
    <property type="evidence" value="ECO:0007669"/>
    <property type="project" value="UniProtKB-UniRule"/>
</dbReference>
<dbReference type="GO" id="GO:0051301">
    <property type="term" value="P:cell division"/>
    <property type="evidence" value="ECO:0007669"/>
    <property type="project" value="UniProtKB-KW"/>
</dbReference>
<dbReference type="GO" id="GO:0071555">
    <property type="term" value="P:cell wall organization"/>
    <property type="evidence" value="ECO:0007669"/>
    <property type="project" value="UniProtKB-KW"/>
</dbReference>
<dbReference type="GO" id="GO:0009252">
    <property type="term" value="P:peptidoglycan biosynthetic process"/>
    <property type="evidence" value="ECO:0007669"/>
    <property type="project" value="UniProtKB-UniRule"/>
</dbReference>
<dbReference type="GO" id="GO:0008360">
    <property type="term" value="P:regulation of cell shape"/>
    <property type="evidence" value="ECO:0007669"/>
    <property type="project" value="UniProtKB-KW"/>
</dbReference>
<dbReference type="Gene3D" id="3.30.465.10">
    <property type="match status" value="1"/>
</dbReference>
<dbReference type="Gene3D" id="3.90.78.10">
    <property type="entry name" value="UDP-N-acetylenolpyruvoylglucosamine reductase, C-terminal domain"/>
    <property type="match status" value="1"/>
</dbReference>
<dbReference type="Gene3D" id="3.30.43.10">
    <property type="entry name" value="Uridine Diphospho-n-acetylenolpyruvylglucosamine Reductase, domain 2"/>
    <property type="match status" value="1"/>
</dbReference>
<dbReference type="HAMAP" id="MF_00037">
    <property type="entry name" value="MurB"/>
    <property type="match status" value="1"/>
</dbReference>
<dbReference type="InterPro" id="IPR016166">
    <property type="entry name" value="FAD-bd_PCMH"/>
</dbReference>
<dbReference type="InterPro" id="IPR036318">
    <property type="entry name" value="FAD-bd_PCMH-like_sf"/>
</dbReference>
<dbReference type="InterPro" id="IPR016167">
    <property type="entry name" value="FAD-bd_PCMH_sub1"/>
</dbReference>
<dbReference type="InterPro" id="IPR016169">
    <property type="entry name" value="FAD-bd_PCMH_sub2"/>
</dbReference>
<dbReference type="InterPro" id="IPR003170">
    <property type="entry name" value="MurB"/>
</dbReference>
<dbReference type="InterPro" id="IPR011601">
    <property type="entry name" value="MurB_C"/>
</dbReference>
<dbReference type="InterPro" id="IPR036635">
    <property type="entry name" value="MurB_C_sf"/>
</dbReference>
<dbReference type="InterPro" id="IPR006094">
    <property type="entry name" value="Oxid_FAD_bind_N"/>
</dbReference>
<dbReference type="NCBIfam" id="TIGR00179">
    <property type="entry name" value="murB"/>
    <property type="match status" value="1"/>
</dbReference>
<dbReference type="NCBIfam" id="NF000755">
    <property type="entry name" value="PRK00046.1"/>
    <property type="match status" value="1"/>
</dbReference>
<dbReference type="NCBIfam" id="NF010478">
    <property type="entry name" value="PRK13903.1"/>
    <property type="match status" value="1"/>
</dbReference>
<dbReference type="PANTHER" id="PTHR21071">
    <property type="entry name" value="UDP-N-ACETYLENOLPYRUVOYLGLUCOSAMINE REDUCTASE"/>
    <property type="match status" value="1"/>
</dbReference>
<dbReference type="PANTHER" id="PTHR21071:SF4">
    <property type="entry name" value="UDP-N-ACETYLENOLPYRUVOYLGLUCOSAMINE REDUCTASE"/>
    <property type="match status" value="1"/>
</dbReference>
<dbReference type="Pfam" id="PF01565">
    <property type="entry name" value="FAD_binding_4"/>
    <property type="match status" value="1"/>
</dbReference>
<dbReference type="Pfam" id="PF02873">
    <property type="entry name" value="MurB_C"/>
    <property type="match status" value="1"/>
</dbReference>
<dbReference type="SUPFAM" id="SSF56176">
    <property type="entry name" value="FAD-binding/transporter-associated domain-like"/>
    <property type="match status" value="1"/>
</dbReference>
<dbReference type="SUPFAM" id="SSF56194">
    <property type="entry name" value="Uridine diphospho-N-Acetylenolpyruvylglucosamine reductase, MurB, C-terminal domain"/>
    <property type="match status" value="1"/>
</dbReference>
<dbReference type="PROSITE" id="PS51387">
    <property type="entry name" value="FAD_PCMH"/>
    <property type="match status" value="1"/>
</dbReference>
<comment type="function">
    <text evidence="1">Cell wall formation.</text>
</comment>
<comment type="catalytic activity">
    <reaction evidence="1">
        <text>UDP-N-acetyl-alpha-D-muramate + NADP(+) = UDP-N-acetyl-3-O-(1-carboxyvinyl)-alpha-D-glucosamine + NADPH + H(+)</text>
        <dbReference type="Rhea" id="RHEA:12248"/>
        <dbReference type="ChEBI" id="CHEBI:15378"/>
        <dbReference type="ChEBI" id="CHEBI:57783"/>
        <dbReference type="ChEBI" id="CHEBI:58349"/>
        <dbReference type="ChEBI" id="CHEBI:68483"/>
        <dbReference type="ChEBI" id="CHEBI:70757"/>
        <dbReference type="EC" id="1.3.1.98"/>
    </reaction>
</comment>
<comment type="cofactor">
    <cofactor evidence="1">
        <name>FAD</name>
        <dbReference type="ChEBI" id="CHEBI:57692"/>
    </cofactor>
</comment>
<comment type="pathway">
    <text evidence="1">Cell wall biogenesis; peptidoglycan biosynthesis.</text>
</comment>
<comment type="subcellular location">
    <subcellularLocation>
        <location evidence="1">Cytoplasm</location>
    </subcellularLocation>
</comment>
<comment type="similarity">
    <text evidence="1">Belongs to the MurB family.</text>
</comment>
<sequence>MPMPPDESALSLLPDHPLAAHNTFGIDARARYAARITHPAQFEALHRDARVATLPHLVLGGGSNVVFTRDFDGLVLLDEIAGRRVVRDDDDAWYVEAGGGENWHAFVGWTLEHGMAGLENLALIPGTVGAAPIQNIGAYGLEMNAYFDSLVAVELATGRSERFDAARCAFGYRDSFFKRDGRGRFAIVSVTFRLPKRWTPRLGYADVTRELEARGISPDAATPRDVFDAVVAIRRAKLPDPRELGNAGSFFKNPVIDRAQFDALHARAPGIVSYPQPDGRVKLAAGWLIDRCGWKGRALGAAAVHDRQALVLVNRGGATGADVLALARAIQHDVRTQFGVELEPEPVCL</sequence>
<name>MURB_BURM1</name>